<name>MSHR_MACSL</name>
<comment type="function">
    <text evidence="1">Receptor for MSH (alpha, beta and gamma) and ACTH. The activity of this receptor is mediated by G proteins which activate adenylate cyclase. Mediates melanogenesis, the production of eumelanin (black/brown) and phaeomelanin (red/yellow), via regulation of cAMP signaling in melanocytes.</text>
</comment>
<comment type="subunit">
    <text evidence="1">Interacts with MGRN1, but does not undergo MGRN1-mediated ubiquitination; this interaction competes with GNAS-binding and thus inhibits agonist-induced cAMP production. Interacts with OPN3; the interaction results in a decrease in MC1R-mediated cAMP signaling and ultimately a decrease in melanin production in melanocytes.</text>
</comment>
<comment type="subcellular location">
    <subcellularLocation>
        <location evidence="1">Cell membrane</location>
        <topology evidence="2">Multi-pass membrane protein</topology>
    </subcellularLocation>
</comment>
<comment type="similarity">
    <text evidence="3">Belongs to the G-protein coupled receptor 1 family.</text>
</comment>
<protein>
    <recommendedName>
        <fullName>Melanocyte-stimulating hormone receptor</fullName>
        <shortName>MSH-R</shortName>
    </recommendedName>
    <alternativeName>
        <fullName>Melanocortin receptor 1</fullName>
        <shortName>MC1-R</shortName>
    </alternativeName>
</protein>
<gene>
    <name type="primary">MC1R</name>
</gene>
<accession>Q864J7</accession>
<accession>A3KF94</accession>
<keyword id="KW-1003">Cell membrane</keyword>
<keyword id="KW-0297">G-protein coupled receptor</keyword>
<keyword id="KW-0325">Glycoprotein</keyword>
<keyword id="KW-0449">Lipoprotein</keyword>
<keyword id="KW-0472">Membrane</keyword>
<keyword id="KW-0564">Palmitate</keyword>
<keyword id="KW-0675">Receptor</keyword>
<keyword id="KW-0807">Transducer</keyword>
<keyword id="KW-0812">Transmembrane</keyword>
<keyword id="KW-1133">Transmembrane helix</keyword>
<dbReference type="EMBL" id="AY205100">
    <property type="protein sequence ID" value="AAP30974.1"/>
    <property type="molecule type" value="Genomic_DNA"/>
</dbReference>
<dbReference type="EMBL" id="AB296225">
    <property type="protein sequence ID" value="BAF48457.1"/>
    <property type="molecule type" value="Genomic_DNA"/>
</dbReference>
<dbReference type="SMR" id="Q864J7"/>
<dbReference type="GlyCosmos" id="Q864J7">
    <property type="glycosylation" value="1 site, No reported glycans"/>
</dbReference>
<dbReference type="GO" id="GO:0005886">
    <property type="term" value="C:plasma membrane"/>
    <property type="evidence" value="ECO:0000250"/>
    <property type="project" value="UniProtKB"/>
</dbReference>
<dbReference type="GO" id="GO:0004980">
    <property type="term" value="F:melanocyte-stimulating hormone receptor activity"/>
    <property type="evidence" value="ECO:0007669"/>
    <property type="project" value="InterPro"/>
</dbReference>
<dbReference type="GO" id="GO:0007189">
    <property type="term" value="P:adenylate cyclase-activating G protein-coupled receptor signaling pathway"/>
    <property type="evidence" value="ECO:0007669"/>
    <property type="project" value="UniProtKB-ARBA"/>
</dbReference>
<dbReference type="CDD" id="cd15351">
    <property type="entry name" value="7tmA_MC1R"/>
    <property type="match status" value="1"/>
</dbReference>
<dbReference type="FunFam" id="1.20.1070.10:FF:000211">
    <property type="entry name" value="Melanocyte-stimulating hormone receptor"/>
    <property type="match status" value="1"/>
</dbReference>
<dbReference type="Gene3D" id="1.20.1070.10">
    <property type="entry name" value="Rhodopsin 7-helix transmembrane proteins"/>
    <property type="match status" value="1"/>
</dbReference>
<dbReference type="InterPro" id="IPR000276">
    <property type="entry name" value="GPCR_Rhodpsn"/>
</dbReference>
<dbReference type="InterPro" id="IPR017452">
    <property type="entry name" value="GPCR_Rhodpsn_7TM"/>
</dbReference>
<dbReference type="InterPro" id="IPR001671">
    <property type="entry name" value="Melcrt_ACTH_rcpt"/>
</dbReference>
<dbReference type="InterPro" id="IPR000761">
    <property type="entry name" value="MSH_rcpt"/>
</dbReference>
<dbReference type="PANTHER" id="PTHR22750">
    <property type="entry name" value="G-PROTEIN COUPLED RECEPTOR"/>
    <property type="match status" value="1"/>
</dbReference>
<dbReference type="Pfam" id="PF00001">
    <property type="entry name" value="7tm_1"/>
    <property type="match status" value="2"/>
</dbReference>
<dbReference type="PRINTS" id="PR00237">
    <property type="entry name" value="GPCRRHODOPSN"/>
</dbReference>
<dbReference type="PRINTS" id="PR00534">
    <property type="entry name" value="MCRFAMILY"/>
</dbReference>
<dbReference type="PRINTS" id="PR00536">
    <property type="entry name" value="MELNOCYTESHR"/>
</dbReference>
<dbReference type="SMART" id="SM01381">
    <property type="entry name" value="7TM_GPCR_Srsx"/>
    <property type="match status" value="1"/>
</dbReference>
<dbReference type="SUPFAM" id="SSF81321">
    <property type="entry name" value="Family A G protein-coupled receptor-like"/>
    <property type="match status" value="1"/>
</dbReference>
<dbReference type="PROSITE" id="PS00237">
    <property type="entry name" value="G_PROTEIN_RECEP_F1_1"/>
    <property type="match status" value="1"/>
</dbReference>
<dbReference type="PROSITE" id="PS50262">
    <property type="entry name" value="G_PROTEIN_RECEP_F1_2"/>
    <property type="match status" value="1"/>
</dbReference>
<reference key="1">
    <citation type="journal article" date="2003" name="Am. J. Phys. Anthropol.">
        <title>Evolution of a pigmentation gene, the melanocortin-1 receptor, in primates.</title>
        <authorList>
            <person name="Mundy N.I."/>
            <person name="Kelly J."/>
        </authorList>
    </citation>
    <scope>NUCLEOTIDE SEQUENCE [GENOMIC DNA]</scope>
    <source>
        <strain>Isolate 1</strain>
    </source>
</reference>
<reference key="2">
    <citation type="journal article" date="2008" name="Am. J. Primatol.">
        <title>Variation of the melanocortin 1 receptor gene in the macaques.</title>
        <authorList>
            <person name="Nakayama K."/>
            <person name="Shotake T."/>
            <person name="Takeneka O."/>
            <person name="Ishida T."/>
        </authorList>
    </citation>
    <scope>NUCLEOTIDE SEQUENCE [GENOMIC DNA]</scope>
</reference>
<evidence type="ECO:0000250" key="1">
    <source>
        <dbReference type="UniProtKB" id="Q01726"/>
    </source>
</evidence>
<evidence type="ECO:0000255" key="2"/>
<evidence type="ECO:0000255" key="3">
    <source>
        <dbReference type="PROSITE-ProRule" id="PRU00521"/>
    </source>
</evidence>
<sequence>MPVQGSQRRLLGSLNSTPTATPHLGLAANQTGARCLEMSIPDGLFLSLGLVSLVENVLVVTAIAKNRNLHSPMYCFICCLALSDLLVSGSNMLETAVTLLLEAGALAARAAVVQQLDNVIDVITCSSMLSSLCFLGAIAVDRYISIFYALRYHSIVTLPRARRAIAAIWVASVLCSTLFIAYYDHAAVLLCLVVFFLAMLVLMAVLYVHMLARACQHAQGIARLHKRQRLAHQGFGLKGAATLTILLGIFFLCWGPFFLHLTLIVLCPQHPTCSCIFKNFNLFLTLIICNAIIDPLIYAFRSQELRRTLKEVLLCSW</sequence>
<proteinExistence type="inferred from homology"/>
<organism>
    <name type="scientific">Macaca silenus</name>
    <name type="common">Lion-tailed macaque</name>
    <dbReference type="NCBI Taxonomy" id="54601"/>
    <lineage>
        <taxon>Eukaryota</taxon>
        <taxon>Metazoa</taxon>
        <taxon>Chordata</taxon>
        <taxon>Craniata</taxon>
        <taxon>Vertebrata</taxon>
        <taxon>Euteleostomi</taxon>
        <taxon>Mammalia</taxon>
        <taxon>Eutheria</taxon>
        <taxon>Euarchontoglires</taxon>
        <taxon>Primates</taxon>
        <taxon>Haplorrhini</taxon>
        <taxon>Catarrhini</taxon>
        <taxon>Cercopithecidae</taxon>
        <taxon>Cercopithecinae</taxon>
        <taxon>Macaca</taxon>
    </lineage>
</organism>
<feature type="chain" id="PRO_0000069830" description="Melanocyte-stimulating hormone receptor">
    <location>
        <begin position="1"/>
        <end position="317"/>
    </location>
</feature>
<feature type="topological domain" description="Extracellular" evidence="2">
    <location>
        <begin position="1"/>
        <end position="37"/>
    </location>
</feature>
<feature type="transmembrane region" description="Helical; Name=1" evidence="2">
    <location>
        <begin position="38"/>
        <end position="63"/>
    </location>
</feature>
<feature type="topological domain" description="Cytoplasmic" evidence="2">
    <location>
        <begin position="64"/>
        <end position="72"/>
    </location>
</feature>
<feature type="transmembrane region" description="Helical; Name=2" evidence="2">
    <location>
        <begin position="73"/>
        <end position="93"/>
    </location>
</feature>
<feature type="topological domain" description="Extracellular" evidence="2">
    <location>
        <begin position="94"/>
        <end position="118"/>
    </location>
</feature>
<feature type="transmembrane region" description="Helical; Name=3" evidence="2">
    <location>
        <begin position="119"/>
        <end position="140"/>
    </location>
</feature>
<feature type="topological domain" description="Cytoplasmic" evidence="2">
    <location>
        <begin position="141"/>
        <end position="163"/>
    </location>
</feature>
<feature type="transmembrane region" description="Helical; Name=4" evidence="2">
    <location>
        <begin position="164"/>
        <end position="183"/>
    </location>
</feature>
<feature type="topological domain" description="Extracellular" evidence="2">
    <location>
        <begin position="184"/>
        <end position="191"/>
    </location>
</feature>
<feature type="transmembrane region" description="Helical; Name=5" evidence="2">
    <location>
        <begin position="192"/>
        <end position="211"/>
    </location>
</feature>
<feature type="topological domain" description="Cytoplasmic" evidence="2">
    <location>
        <begin position="212"/>
        <end position="240"/>
    </location>
</feature>
<feature type="transmembrane region" description="Helical; Name=6" evidence="2">
    <location>
        <begin position="241"/>
        <end position="266"/>
    </location>
</feature>
<feature type="topological domain" description="Extracellular" evidence="2">
    <location>
        <begin position="267"/>
        <end position="279"/>
    </location>
</feature>
<feature type="transmembrane region" description="Helical; Name=7" evidence="2">
    <location>
        <begin position="280"/>
        <end position="300"/>
    </location>
</feature>
<feature type="topological domain" description="Cytoplasmic" evidence="2">
    <location>
        <begin position="301"/>
        <end position="317"/>
    </location>
</feature>
<feature type="lipid moiety-binding region" description="S-palmitoyl cysteine" evidence="2">
    <location>
        <position position="315"/>
    </location>
</feature>
<feature type="glycosylation site" description="N-linked (GlcNAc...) asparagine" evidence="2">
    <location>
        <position position="29"/>
    </location>
</feature>